<proteinExistence type="evidence at transcript level"/>
<organism>
    <name type="scientific">Rattus norvegicus</name>
    <name type="common">Rat</name>
    <dbReference type="NCBI Taxonomy" id="10116"/>
    <lineage>
        <taxon>Eukaryota</taxon>
        <taxon>Metazoa</taxon>
        <taxon>Chordata</taxon>
        <taxon>Craniata</taxon>
        <taxon>Vertebrata</taxon>
        <taxon>Euteleostomi</taxon>
        <taxon>Mammalia</taxon>
        <taxon>Eutheria</taxon>
        <taxon>Euarchontoglires</taxon>
        <taxon>Glires</taxon>
        <taxon>Rodentia</taxon>
        <taxon>Myomorpha</taxon>
        <taxon>Muroidea</taxon>
        <taxon>Muridae</taxon>
        <taxon>Murinae</taxon>
        <taxon>Rattus</taxon>
    </lineage>
</organism>
<dbReference type="EMBL" id="M64392">
    <property type="protein sequence ID" value="AAA41755.1"/>
    <property type="molecule type" value="mRNA"/>
</dbReference>
<dbReference type="EMBL" id="AABR06064493">
    <property type="status" value="NOT_ANNOTATED_CDS"/>
    <property type="molecule type" value="Genomic_DNA"/>
</dbReference>
<dbReference type="EMBL" id="CH473948">
    <property type="protein sequence ID" value="EDM05156.1"/>
    <property type="molecule type" value="Genomic_DNA"/>
</dbReference>
<dbReference type="PIR" id="A37286">
    <property type="entry name" value="A37286"/>
</dbReference>
<dbReference type="RefSeq" id="NP_001000724.1">
    <property type="nucleotide sequence ID" value="NM_001000724.1"/>
</dbReference>
<dbReference type="SMR" id="P23274"/>
<dbReference type="FunCoup" id="P23274">
    <property type="interactions" value="1005"/>
</dbReference>
<dbReference type="STRING" id="10116.ENSRNOP00000026857"/>
<dbReference type="GlyCosmos" id="P23274">
    <property type="glycosylation" value="1 site, No reported glycans"/>
</dbReference>
<dbReference type="GlyGen" id="P23274">
    <property type="glycosylation" value="1 site"/>
</dbReference>
<dbReference type="PaxDb" id="10116-ENSRNOP00000065781"/>
<dbReference type="Ensembl" id="ENSRNOT00000065541.4">
    <property type="protein sequence ID" value="ENSRNOP00000067753.3"/>
    <property type="gene ID" value="ENSRNOG00000064321.1"/>
</dbReference>
<dbReference type="Ensembl" id="ENSRNOT00000096360.1">
    <property type="protein sequence ID" value="ENSRNOP00000082889.1"/>
    <property type="gene ID" value="ENSRNOG00000064321.1"/>
</dbReference>
<dbReference type="GeneID" id="404977"/>
<dbReference type="KEGG" id="rno:404977"/>
<dbReference type="AGR" id="RGD:1334190"/>
<dbReference type="CTD" id="258226"/>
<dbReference type="RGD" id="1334190">
    <property type="gene designation" value="Olr1468"/>
</dbReference>
<dbReference type="eggNOG" id="ENOG502SI5J">
    <property type="taxonomic scope" value="Eukaryota"/>
</dbReference>
<dbReference type="GeneTree" id="ENSGT00940000153124"/>
<dbReference type="InParanoid" id="P23274"/>
<dbReference type="OMA" id="MFLIRVD"/>
<dbReference type="OrthoDB" id="73292at9989"/>
<dbReference type="PRO" id="PR:P23274"/>
<dbReference type="Proteomes" id="UP000002494">
    <property type="component" value="Chromosome 10"/>
</dbReference>
<dbReference type="Proteomes" id="UP000234681">
    <property type="component" value="Chromosome 10"/>
</dbReference>
<dbReference type="GO" id="GO:0005886">
    <property type="term" value="C:plasma membrane"/>
    <property type="evidence" value="ECO:0000318"/>
    <property type="project" value="GO_Central"/>
</dbReference>
<dbReference type="GO" id="GO:0004930">
    <property type="term" value="F:G protein-coupled receptor activity"/>
    <property type="evidence" value="ECO:0007669"/>
    <property type="project" value="UniProtKB-KW"/>
</dbReference>
<dbReference type="GO" id="GO:0004984">
    <property type="term" value="F:olfactory receptor activity"/>
    <property type="evidence" value="ECO:0000318"/>
    <property type="project" value="GO_Central"/>
</dbReference>
<dbReference type="GO" id="GO:0007165">
    <property type="term" value="P:signal transduction"/>
    <property type="evidence" value="ECO:0000318"/>
    <property type="project" value="GO_Central"/>
</dbReference>
<dbReference type="CDD" id="cd15918">
    <property type="entry name" value="7tmA_OR1_7-like"/>
    <property type="match status" value="1"/>
</dbReference>
<dbReference type="FunFam" id="1.10.1220.70:FF:000001">
    <property type="entry name" value="Olfactory receptor"/>
    <property type="match status" value="1"/>
</dbReference>
<dbReference type="FunFam" id="1.20.1070.10:FF:000009">
    <property type="entry name" value="Olfactory receptor"/>
    <property type="match status" value="1"/>
</dbReference>
<dbReference type="Gene3D" id="1.20.1070.10">
    <property type="entry name" value="Rhodopsin 7-helix transmembrane proteins"/>
    <property type="match status" value="1"/>
</dbReference>
<dbReference type="InterPro" id="IPR000276">
    <property type="entry name" value="GPCR_Rhodpsn"/>
</dbReference>
<dbReference type="InterPro" id="IPR017452">
    <property type="entry name" value="GPCR_Rhodpsn_7TM"/>
</dbReference>
<dbReference type="InterPro" id="IPR000725">
    <property type="entry name" value="Olfact_rcpt"/>
</dbReference>
<dbReference type="PANTHER" id="PTHR48001">
    <property type="entry name" value="OLFACTORY RECEPTOR"/>
    <property type="match status" value="1"/>
</dbReference>
<dbReference type="Pfam" id="PF13853">
    <property type="entry name" value="7tm_4"/>
    <property type="match status" value="1"/>
</dbReference>
<dbReference type="PRINTS" id="PR00237">
    <property type="entry name" value="GPCRRHODOPSN"/>
</dbReference>
<dbReference type="PRINTS" id="PR00245">
    <property type="entry name" value="OLFACTORYR"/>
</dbReference>
<dbReference type="SUPFAM" id="SSF81321">
    <property type="entry name" value="Family A G protein-coupled receptor-like"/>
    <property type="match status" value="1"/>
</dbReference>
<dbReference type="PROSITE" id="PS00237">
    <property type="entry name" value="G_PROTEIN_RECEP_F1_1"/>
    <property type="match status" value="1"/>
</dbReference>
<dbReference type="PROSITE" id="PS50262">
    <property type="entry name" value="G_PROTEIN_RECEP_F1_2"/>
    <property type="match status" value="1"/>
</dbReference>
<accession>P23274</accession>
<accession>M0R8I5</accession>
<name>O1468_RAT</name>
<reference key="1">
    <citation type="journal article" date="1991" name="Cell">
        <title>A novel multigene family may encode odorant receptors: a molecular basis for odor recognition.</title>
        <authorList>
            <person name="Buck L."/>
            <person name="Axel R."/>
        </authorList>
    </citation>
    <scope>NUCLEOTIDE SEQUENCE [MRNA]</scope>
    <source>
        <strain>Sprague-Dawley</strain>
    </source>
</reference>
<reference key="2">
    <citation type="journal article" date="2004" name="Nature">
        <title>Genome sequence of the Brown Norway rat yields insights into mammalian evolution.</title>
        <authorList>
            <person name="Gibbs R.A."/>
            <person name="Weinstock G.M."/>
            <person name="Metzker M.L."/>
            <person name="Muzny D.M."/>
            <person name="Sodergren E.J."/>
            <person name="Scherer S."/>
            <person name="Scott G."/>
            <person name="Steffen D."/>
            <person name="Worley K.C."/>
            <person name="Burch P.E."/>
            <person name="Okwuonu G."/>
            <person name="Hines S."/>
            <person name="Lewis L."/>
            <person name="Deramo C."/>
            <person name="Delgado O."/>
            <person name="Dugan-Rocha S."/>
            <person name="Miner G."/>
            <person name="Morgan M."/>
            <person name="Hawes A."/>
            <person name="Gill R."/>
            <person name="Holt R.A."/>
            <person name="Adams M.D."/>
            <person name="Amanatides P.G."/>
            <person name="Baden-Tillson H."/>
            <person name="Barnstead M."/>
            <person name="Chin S."/>
            <person name="Evans C.A."/>
            <person name="Ferriera S."/>
            <person name="Fosler C."/>
            <person name="Glodek A."/>
            <person name="Gu Z."/>
            <person name="Jennings D."/>
            <person name="Kraft C.L."/>
            <person name="Nguyen T."/>
            <person name="Pfannkoch C.M."/>
            <person name="Sitter C."/>
            <person name="Sutton G.G."/>
            <person name="Venter J.C."/>
            <person name="Woodage T."/>
            <person name="Smith D."/>
            <person name="Lee H.-M."/>
            <person name="Gustafson E."/>
            <person name="Cahill P."/>
            <person name="Kana A."/>
            <person name="Doucette-Stamm L."/>
            <person name="Weinstock K."/>
            <person name="Fechtel K."/>
            <person name="Weiss R.B."/>
            <person name="Dunn D.M."/>
            <person name="Green E.D."/>
            <person name="Blakesley R.W."/>
            <person name="Bouffard G.G."/>
            <person name="De Jong P.J."/>
            <person name="Osoegawa K."/>
            <person name="Zhu B."/>
            <person name="Marra M."/>
            <person name="Schein J."/>
            <person name="Bosdet I."/>
            <person name="Fjell C."/>
            <person name="Jones S."/>
            <person name="Krzywinski M."/>
            <person name="Mathewson C."/>
            <person name="Siddiqui A."/>
            <person name="Wye N."/>
            <person name="McPherson J."/>
            <person name="Zhao S."/>
            <person name="Fraser C.M."/>
            <person name="Shetty J."/>
            <person name="Shatsman S."/>
            <person name="Geer K."/>
            <person name="Chen Y."/>
            <person name="Abramzon S."/>
            <person name="Nierman W.C."/>
            <person name="Havlak P.H."/>
            <person name="Chen R."/>
            <person name="Durbin K.J."/>
            <person name="Egan A."/>
            <person name="Ren Y."/>
            <person name="Song X.-Z."/>
            <person name="Li B."/>
            <person name="Liu Y."/>
            <person name="Qin X."/>
            <person name="Cawley S."/>
            <person name="Cooney A.J."/>
            <person name="D'Souza L.M."/>
            <person name="Martin K."/>
            <person name="Wu J.Q."/>
            <person name="Gonzalez-Garay M.L."/>
            <person name="Jackson A.R."/>
            <person name="Kalafus K.J."/>
            <person name="McLeod M.P."/>
            <person name="Milosavljevic A."/>
            <person name="Virk D."/>
            <person name="Volkov A."/>
            <person name="Wheeler D.A."/>
            <person name="Zhang Z."/>
            <person name="Bailey J.A."/>
            <person name="Eichler E.E."/>
            <person name="Tuzun E."/>
            <person name="Birney E."/>
            <person name="Mongin E."/>
            <person name="Ureta-Vidal A."/>
            <person name="Woodwark C."/>
            <person name="Zdobnov E."/>
            <person name="Bork P."/>
            <person name="Suyama M."/>
            <person name="Torrents D."/>
            <person name="Alexandersson M."/>
            <person name="Trask B.J."/>
            <person name="Young J.M."/>
            <person name="Huang H."/>
            <person name="Wang H."/>
            <person name="Xing H."/>
            <person name="Daniels S."/>
            <person name="Gietzen D."/>
            <person name="Schmidt J."/>
            <person name="Stevens K."/>
            <person name="Vitt U."/>
            <person name="Wingrove J."/>
            <person name="Camara F."/>
            <person name="Mar Alba M."/>
            <person name="Abril J.F."/>
            <person name="Guigo R."/>
            <person name="Smit A."/>
            <person name="Dubchak I."/>
            <person name="Rubin E.M."/>
            <person name="Couronne O."/>
            <person name="Poliakov A."/>
            <person name="Huebner N."/>
            <person name="Ganten D."/>
            <person name="Goesele C."/>
            <person name="Hummel O."/>
            <person name="Kreitler T."/>
            <person name="Lee Y.-A."/>
            <person name="Monti J."/>
            <person name="Schulz H."/>
            <person name="Zimdahl H."/>
            <person name="Himmelbauer H."/>
            <person name="Lehrach H."/>
            <person name="Jacob H.J."/>
            <person name="Bromberg S."/>
            <person name="Gullings-Handley J."/>
            <person name="Jensen-Seaman M.I."/>
            <person name="Kwitek A.E."/>
            <person name="Lazar J."/>
            <person name="Pasko D."/>
            <person name="Tonellato P.J."/>
            <person name="Twigger S."/>
            <person name="Ponting C.P."/>
            <person name="Duarte J.M."/>
            <person name="Rice S."/>
            <person name="Goodstadt L."/>
            <person name="Beatson S.A."/>
            <person name="Emes R.D."/>
            <person name="Winter E.E."/>
            <person name="Webber C."/>
            <person name="Brandt P."/>
            <person name="Nyakatura G."/>
            <person name="Adetobi M."/>
            <person name="Chiaromonte F."/>
            <person name="Elnitski L."/>
            <person name="Eswara P."/>
            <person name="Hardison R.C."/>
            <person name="Hou M."/>
            <person name="Kolbe D."/>
            <person name="Makova K."/>
            <person name="Miller W."/>
            <person name="Nekrutenko A."/>
            <person name="Riemer C."/>
            <person name="Schwartz S."/>
            <person name="Taylor J."/>
            <person name="Yang S."/>
            <person name="Zhang Y."/>
            <person name="Lindpaintner K."/>
            <person name="Andrews T.D."/>
            <person name="Caccamo M."/>
            <person name="Clamp M."/>
            <person name="Clarke L."/>
            <person name="Curwen V."/>
            <person name="Durbin R.M."/>
            <person name="Eyras E."/>
            <person name="Searle S.M."/>
            <person name="Cooper G.M."/>
            <person name="Batzoglou S."/>
            <person name="Brudno M."/>
            <person name="Sidow A."/>
            <person name="Stone E.A."/>
            <person name="Payseur B.A."/>
            <person name="Bourque G."/>
            <person name="Lopez-Otin C."/>
            <person name="Puente X.S."/>
            <person name="Chakrabarti K."/>
            <person name="Chatterji S."/>
            <person name="Dewey C."/>
            <person name="Pachter L."/>
            <person name="Bray N."/>
            <person name="Yap V.B."/>
            <person name="Caspi A."/>
            <person name="Tesler G."/>
            <person name="Pevzner P.A."/>
            <person name="Haussler D."/>
            <person name="Roskin K.M."/>
            <person name="Baertsch R."/>
            <person name="Clawson H."/>
            <person name="Furey T.S."/>
            <person name="Hinrichs A.S."/>
            <person name="Karolchik D."/>
            <person name="Kent W.J."/>
            <person name="Rosenbloom K.R."/>
            <person name="Trumbower H."/>
            <person name="Weirauch M."/>
            <person name="Cooper D.N."/>
            <person name="Stenson P.D."/>
            <person name="Ma B."/>
            <person name="Brent M."/>
            <person name="Arumugam M."/>
            <person name="Shteynberg D."/>
            <person name="Copley R.R."/>
            <person name="Taylor M.S."/>
            <person name="Riethman H."/>
            <person name="Mudunuri U."/>
            <person name="Peterson J."/>
            <person name="Guyer M."/>
            <person name="Felsenfeld A."/>
            <person name="Old S."/>
            <person name="Mockrin S."/>
            <person name="Collins F.S."/>
        </authorList>
    </citation>
    <scope>NUCLEOTIDE SEQUENCE [LARGE SCALE GENOMIC DNA]</scope>
    <source>
        <strain>Brown Norway</strain>
    </source>
</reference>
<reference key="3">
    <citation type="submission" date="2005-07" db="EMBL/GenBank/DDBJ databases">
        <authorList>
            <person name="Mural R.J."/>
            <person name="Adams M.D."/>
            <person name="Myers E.W."/>
            <person name="Smith H.O."/>
            <person name="Venter J.C."/>
        </authorList>
    </citation>
    <scope>NUCLEOTIDE SEQUENCE [LARGE SCALE GENOMIC DNA]</scope>
</reference>
<protein>
    <recommendedName>
        <fullName>Olfactory receptor 1468</fullName>
    </recommendedName>
    <alternativeName>
        <fullName>Olfactory receptor-like protein I15</fullName>
    </alternativeName>
</protein>
<gene>
    <name type="primary">Olr1468</name>
</gene>
<evidence type="ECO:0000255" key="1"/>
<evidence type="ECO:0000255" key="2">
    <source>
        <dbReference type="PROSITE-ProRule" id="PRU00521"/>
    </source>
</evidence>
<evidence type="ECO:0000305" key="3"/>
<feature type="chain" id="PRO_0000150879" description="Olfactory receptor 1468">
    <location>
        <begin position="1"/>
        <end position="314"/>
    </location>
</feature>
<feature type="topological domain" description="Extracellular" evidence="1">
    <location>
        <begin position="1"/>
        <end position="25"/>
    </location>
</feature>
<feature type="transmembrane region" description="Helical; Name=1" evidence="1">
    <location>
        <begin position="26"/>
        <end position="49"/>
    </location>
</feature>
<feature type="topological domain" description="Cytoplasmic" evidence="1">
    <location>
        <begin position="50"/>
        <end position="57"/>
    </location>
</feature>
<feature type="transmembrane region" description="Helical; Name=2" evidence="1">
    <location>
        <begin position="58"/>
        <end position="79"/>
    </location>
</feature>
<feature type="topological domain" description="Extracellular" evidence="1">
    <location>
        <begin position="80"/>
        <end position="100"/>
    </location>
</feature>
<feature type="transmembrane region" description="Helical; Name=3" evidence="1">
    <location>
        <begin position="101"/>
        <end position="120"/>
    </location>
</feature>
<feature type="topological domain" description="Cytoplasmic" evidence="1">
    <location>
        <begin position="121"/>
        <end position="139"/>
    </location>
</feature>
<feature type="transmembrane region" description="Helical; Name=4" evidence="1">
    <location>
        <begin position="140"/>
        <end position="158"/>
    </location>
</feature>
<feature type="topological domain" description="Extracellular" evidence="1">
    <location>
        <begin position="159"/>
        <end position="196"/>
    </location>
</feature>
<feature type="transmembrane region" description="Helical; Name=5" evidence="1">
    <location>
        <begin position="197"/>
        <end position="219"/>
    </location>
</feature>
<feature type="topological domain" description="Cytoplasmic" evidence="1">
    <location>
        <begin position="220"/>
        <end position="236"/>
    </location>
</feature>
<feature type="transmembrane region" description="Helical; Name=6" evidence="1">
    <location>
        <begin position="237"/>
        <end position="260"/>
    </location>
</feature>
<feature type="topological domain" description="Extracellular" evidence="1">
    <location>
        <begin position="261"/>
        <end position="272"/>
    </location>
</feature>
<feature type="transmembrane region" description="Helical; Name=7" evidence="1">
    <location>
        <begin position="273"/>
        <end position="292"/>
    </location>
</feature>
<feature type="topological domain" description="Cytoplasmic" evidence="1">
    <location>
        <begin position="293"/>
        <end position="314"/>
    </location>
</feature>
<feature type="glycosylation site" description="N-linked (GlcNAc...) asparagine" evidence="1">
    <location>
        <position position="5"/>
    </location>
</feature>
<feature type="disulfide bond" evidence="2">
    <location>
        <begin position="97"/>
        <end position="189"/>
    </location>
</feature>
<feature type="sequence conflict" description="In Ref. 1; AAA41755." evidence="3" ref="1">
    <original>G</original>
    <variation>F</variation>
    <location>
        <position position="16"/>
    </location>
</feature>
<keyword id="KW-1003">Cell membrane</keyword>
<keyword id="KW-1015">Disulfide bond</keyword>
<keyword id="KW-0297">G-protein coupled receptor</keyword>
<keyword id="KW-0325">Glycoprotein</keyword>
<keyword id="KW-0472">Membrane</keyword>
<keyword id="KW-0552">Olfaction</keyword>
<keyword id="KW-0675">Receptor</keyword>
<keyword id="KW-1185">Reference proteome</keyword>
<keyword id="KW-0716">Sensory transduction</keyword>
<keyword id="KW-0807">Transducer</keyword>
<keyword id="KW-0812">Transmembrane</keyword>
<keyword id="KW-1133">Transmembrane helix</keyword>
<comment type="function">
    <text evidence="3">Odorant receptor.</text>
</comment>
<comment type="subcellular location">
    <subcellularLocation>
        <location>Cell membrane</location>
        <topology>Multi-pass membrane protein</topology>
    </subcellularLocation>
</comment>
<comment type="tissue specificity">
    <text>Olfactory epithelium.</text>
</comment>
<comment type="similarity">
    <text evidence="2">Belongs to the G-protein coupled receptor 1 family.</text>
</comment>
<sequence length="314" mass="35474">MTEENQTVISQFLLLGLPIPSEHQHVFYALFLSMYLTTVLGNLIIIILIHLDSHLHTPMYLFLSNLSFSDLCFSSVTMPKLLQNMQSQVPSIPFAGCLTQLYFYLYFADLESFLLVAMAYDRYVAICFPLHYMSIMSPKLCVSLVVLSWVLTTFHAMLHTLLMARLSFCADNMIPHFFCDISPLLKLSCSDTHVNELVIFVMGGLVIVIPFVLIIVSYARVVASILKVPSVRGIHKIFSTCGSHLSVVSLFYGTIIGLYLCPSANNSTVKETVMAMMYTVVTPMLNPFIYSLRNRDMKEALIRVLCKKKITFCL</sequence>